<name>Y1892_XYLFT</name>
<feature type="chain" id="PRO_0000305334" description="Probable transporter PD_1892">
    <location>
        <begin position="1"/>
        <end position="135"/>
    </location>
</feature>
<feature type="transmembrane region" description="Helical" evidence="2">
    <location>
        <begin position="4"/>
        <end position="24"/>
    </location>
</feature>
<feature type="transmembrane region" description="Helical" evidence="2">
    <location>
        <begin position="45"/>
        <end position="65"/>
    </location>
</feature>
<feature type="transmembrane region" description="Helical" evidence="2">
    <location>
        <begin position="71"/>
        <end position="91"/>
    </location>
</feature>
<feature type="transmembrane region" description="Helical" evidence="2">
    <location>
        <begin position="114"/>
        <end position="134"/>
    </location>
</feature>
<gene>
    <name type="ordered locus">PD_1892</name>
</gene>
<sequence>MSEYWYPILGGILLGLSTVMLLLLNGRIAGISGIVGRLLQGGNPAQNIPFVVGLVLGPLLFTVIFDRFPSVTVAATWPTIIVAGLLVGLGTRMGAGCTSGHGIVGIARHSPRSIVATAIFLISGMATATFMGVYQ</sequence>
<protein>
    <recommendedName>
        <fullName evidence="3">Probable transporter PD_1892</fullName>
    </recommendedName>
</protein>
<accession>Q87AD4</accession>
<reference key="1">
    <citation type="journal article" date="2003" name="J. Bacteriol.">
        <title>Comparative analyses of the complete genome sequences of Pierce's disease and citrus variegated chlorosis strains of Xylella fastidiosa.</title>
        <authorList>
            <person name="Van Sluys M.A."/>
            <person name="de Oliveira M.C."/>
            <person name="Monteiro-Vitorello C.B."/>
            <person name="Miyaki C.Y."/>
            <person name="Furlan L.R."/>
            <person name="Camargo L.E.A."/>
            <person name="da Silva A.C.R."/>
            <person name="Moon D.H."/>
            <person name="Takita M.A."/>
            <person name="Lemos E.G.M."/>
            <person name="Machado M.A."/>
            <person name="Ferro M.I.T."/>
            <person name="da Silva F.R."/>
            <person name="Goldman M.H.S."/>
            <person name="Goldman G.H."/>
            <person name="Lemos M.V.F."/>
            <person name="El-Dorry H."/>
            <person name="Tsai S.M."/>
            <person name="Carrer H."/>
            <person name="Carraro D.M."/>
            <person name="de Oliveira R.C."/>
            <person name="Nunes L.R."/>
            <person name="Siqueira W.J."/>
            <person name="Coutinho L.L."/>
            <person name="Kimura E.T."/>
            <person name="Ferro E.S."/>
            <person name="Harakava R."/>
            <person name="Kuramae E.E."/>
            <person name="Marino C.L."/>
            <person name="Giglioti E."/>
            <person name="Abreu I.L."/>
            <person name="Alves L.M.C."/>
            <person name="do Amaral A.M."/>
            <person name="Baia G.S."/>
            <person name="Blanco S.R."/>
            <person name="Brito M.S."/>
            <person name="Cannavan F.S."/>
            <person name="Celestino A.V."/>
            <person name="da Cunha A.F."/>
            <person name="Fenille R.C."/>
            <person name="Ferro J.A."/>
            <person name="Formighieri E.F."/>
            <person name="Kishi L.T."/>
            <person name="Leoni S.G."/>
            <person name="Oliveira A.R."/>
            <person name="Rosa V.E. Jr."/>
            <person name="Sassaki F.T."/>
            <person name="Sena J.A.D."/>
            <person name="de Souza A.A."/>
            <person name="Truffi D."/>
            <person name="Tsukumo F."/>
            <person name="Yanai G.M."/>
            <person name="Zaros L.G."/>
            <person name="Civerolo E.L."/>
            <person name="Simpson A.J.G."/>
            <person name="Almeida N.F. Jr."/>
            <person name="Setubal J.C."/>
            <person name="Kitajima J.P."/>
        </authorList>
    </citation>
    <scope>NUCLEOTIDE SEQUENCE [LARGE SCALE GENOMIC DNA]</scope>
    <source>
        <strain>Temecula1 / ATCC 700964</strain>
    </source>
</reference>
<organism>
    <name type="scientific">Xylella fastidiosa (strain Temecula1 / ATCC 700964)</name>
    <dbReference type="NCBI Taxonomy" id="183190"/>
    <lineage>
        <taxon>Bacteria</taxon>
        <taxon>Pseudomonadati</taxon>
        <taxon>Pseudomonadota</taxon>
        <taxon>Gammaproteobacteria</taxon>
        <taxon>Lysobacterales</taxon>
        <taxon>Lysobacteraceae</taxon>
        <taxon>Xylella</taxon>
    </lineage>
</organism>
<dbReference type="EMBL" id="AE009442">
    <property type="protein sequence ID" value="AAO29723.1"/>
    <property type="molecule type" value="Genomic_DNA"/>
</dbReference>
<dbReference type="RefSeq" id="WP_011098299.1">
    <property type="nucleotide sequence ID" value="NC_004556.1"/>
</dbReference>
<dbReference type="SMR" id="Q87AD4"/>
<dbReference type="KEGG" id="xft:PD_1892"/>
<dbReference type="HOGENOM" id="CLU_122700_1_0_6"/>
<dbReference type="Proteomes" id="UP000002516">
    <property type="component" value="Chromosome"/>
</dbReference>
<dbReference type="GO" id="GO:0005886">
    <property type="term" value="C:plasma membrane"/>
    <property type="evidence" value="ECO:0007669"/>
    <property type="project" value="UniProtKB-SubCell"/>
</dbReference>
<dbReference type="InterPro" id="IPR007272">
    <property type="entry name" value="Sulf_transp_TsuA/YedE"/>
</dbReference>
<dbReference type="PANTHER" id="PTHR30574">
    <property type="entry name" value="INNER MEMBRANE PROTEIN YEDE"/>
    <property type="match status" value="1"/>
</dbReference>
<dbReference type="PANTHER" id="PTHR30574:SF1">
    <property type="entry name" value="SULPHUR TRANSPORT DOMAIN-CONTAINING PROTEIN"/>
    <property type="match status" value="1"/>
</dbReference>
<dbReference type="Pfam" id="PF04143">
    <property type="entry name" value="Sulf_transp"/>
    <property type="match status" value="1"/>
</dbReference>
<proteinExistence type="inferred from homology"/>
<keyword id="KW-0997">Cell inner membrane</keyword>
<keyword id="KW-1003">Cell membrane</keyword>
<keyword id="KW-0472">Membrane</keyword>
<keyword id="KW-1185">Reference proteome</keyword>
<keyword id="KW-0812">Transmembrane</keyword>
<keyword id="KW-1133">Transmembrane helix</keyword>
<keyword id="KW-0813">Transport</keyword>
<comment type="subcellular location">
    <subcellularLocation>
        <location evidence="3">Cell inner membrane</location>
        <topology evidence="2">Multi-pass membrane protein</topology>
    </subcellularLocation>
</comment>
<comment type="induction">
    <text evidence="1">Repressed by BigR.</text>
</comment>
<comment type="miscellaneous">
    <text>Probably part of an operon that comprises bigR, blh, PD_1893 and PD_1894.</text>
</comment>
<comment type="similarity">
    <text evidence="3">Belongs to the TsuA/YedE (TC 9.B.102) family.</text>
</comment>
<evidence type="ECO:0000250" key="1"/>
<evidence type="ECO:0000255" key="2"/>
<evidence type="ECO:0000305" key="3"/>